<comment type="function">
    <text evidence="1">Required for the formation of a threonylcarbamoyl group on adenosine at position 37 (t(6)A37) in tRNAs that read codons beginning with adenine. Is involved in the transfer of the threonylcarbamoyl moiety of threonylcarbamoyl-AMP (TC-AMP) to the N6 group of A37, together with TsaE and TsaB. TsaD likely plays a direct catalytic role in this reaction.</text>
</comment>
<comment type="catalytic activity">
    <reaction evidence="1">
        <text>L-threonylcarbamoyladenylate + adenosine(37) in tRNA = N(6)-L-threonylcarbamoyladenosine(37) in tRNA + AMP + H(+)</text>
        <dbReference type="Rhea" id="RHEA:37059"/>
        <dbReference type="Rhea" id="RHEA-COMP:10162"/>
        <dbReference type="Rhea" id="RHEA-COMP:10163"/>
        <dbReference type="ChEBI" id="CHEBI:15378"/>
        <dbReference type="ChEBI" id="CHEBI:73682"/>
        <dbReference type="ChEBI" id="CHEBI:74411"/>
        <dbReference type="ChEBI" id="CHEBI:74418"/>
        <dbReference type="ChEBI" id="CHEBI:456215"/>
        <dbReference type="EC" id="2.3.1.234"/>
    </reaction>
</comment>
<comment type="cofactor">
    <cofactor evidence="1">
        <name>Fe(2+)</name>
        <dbReference type="ChEBI" id="CHEBI:29033"/>
    </cofactor>
    <text evidence="1">Binds 1 Fe(2+) ion per subunit.</text>
</comment>
<comment type="subcellular location">
    <subcellularLocation>
        <location evidence="1">Cytoplasm</location>
    </subcellularLocation>
</comment>
<comment type="similarity">
    <text evidence="1">Belongs to the KAE1 / TsaD family.</text>
</comment>
<gene>
    <name evidence="1" type="primary">tsaD</name>
    <name type="synonym">gcp</name>
    <name type="ordered locus">LA_1450</name>
</gene>
<organism>
    <name type="scientific">Leptospira interrogans serogroup Icterohaemorrhagiae serovar Lai (strain 56601)</name>
    <dbReference type="NCBI Taxonomy" id="189518"/>
    <lineage>
        <taxon>Bacteria</taxon>
        <taxon>Pseudomonadati</taxon>
        <taxon>Spirochaetota</taxon>
        <taxon>Spirochaetia</taxon>
        <taxon>Leptospirales</taxon>
        <taxon>Leptospiraceae</taxon>
        <taxon>Leptospira</taxon>
    </lineage>
</organism>
<keyword id="KW-0012">Acyltransferase</keyword>
<keyword id="KW-0963">Cytoplasm</keyword>
<keyword id="KW-0408">Iron</keyword>
<keyword id="KW-0479">Metal-binding</keyword>
<keyword id="KW-1185">Reference proteome</keyword>
<keyword id="KW-0808">Transferase</keyword>
<keyword id="KW-0819">tRNA processing</keyword>
<accession>Q8F661</accession>
<dbReference type="EC" id="2.3.1.234" evidence="1"/>
<dbReference type="EMBL" id="AE010300">
    <property type="protein sequence ID" value="AAN48649.1"/>
    <property type="molecule type" value="Genomic_DNA"/>
</dbReference>
<dbReference type="RefSeq" id="NP_711631.1">
    <property type="nucleotide sequence ID" value="NC_004342.2"/>
</dbReference>
<dbReference type="RefSeq" id="WP_000579852.1">
    <property type="nucleotide sequence ID" value="NC_004342.2"/>
</dbReference>
<dbReference type="SMR" id="Q8F661"/>
<dbReference type="FunCoup" id="Q8F661">
    <property type="interactions" value="489"/>
</dbReference>
<dbReference type="STRING" id="189518.LA_1450"/>
<dbReference type="PaxDb" id="189518-LA_1450"/>
<dbReference type="EnsemblBacteria" id="AAN48649">
    <property type="protein sequence ID" value="AAN48649"/>
    <property type="gene ID" value="LA_1450"/>
</dbReference>
<dbReference type="GeneID" id="61142186"/>
<dbReference type="KEGG" id="lil:LA_1450"/>
<dbReference type="PATRIC" id="fig|189518.3.peg.1445"/>
<dbReference type="HOGENOM" id="CLU_023208_0_2_12"/>
<dbReference type="InParanoid" id="Q8F661"/>
<dbReference type="OrthoDB" id="9806197at2"/>
<dbReference type="Proteomes" id="UP000001408">
    <property type="component" value="Chromosome I"/>
</dbReference>
<dbReference type="GO" id="GO:0005737">
    <property type="term" value="C:cytoplasm"/>
    <property type="evidence" value="ECO:0007669"/>
    <property type="project" value="UniProtKB-SubCell"/>
</dbReference>
<dbReference type="GO" id="GO:0005506">
    <property type="term" value="F:iron ion binding"/>
    <property type="evidence" value="ECO:0007669"/>
    <property type="project" value="UniProtKB-UniRule"/>
</dbReference>
<dbReference type="GO" id="GO:0061711">
    <property type="term" value="F:N(6)-L-threonylcarbamoyladenine synthase activity"/>
    <property type="evidence" value="ECO:0007669"/>
    <property type="project" value="UniProtKB-EC"/>
</dbReference>
<dbReference type="GO" id="GO:0002949">
    <property type="term" value="P:tRNA threonylcarbamoyladenosine modification"/>
    <property type="evidence" value="ECO:0007669"/>
    <property type="project" value="UniProtKB-UniRule"/>
</dbReference>
<dbReference type="FunFam" id="3.30.420.40:FF:000360">
    <property type="entry name" value="tRNA N6-adenosine threonylcarbamoyltransferase"/>
    <property type="match status" value="1"/>
</dbReference>
<dbReference type="Gene3D" id="3.30.420.40">
    <property type="match status" value="2"/>
</dbReference>
<dbReference type="HAMAP" id="MF_01445">
    <property type="entry name" value="TsaD"/>
    <property type="match status" value="1"/>
</dbReference>
<dbReference type="InterPro" id="IPR043129">
    <property type="entry name" value="ATPase_NBD"/>
</dbReference>
<dbReference type="InterPro" id="IPR000905">
    <property type="entry name" value="Gcp-like_dom"/>
</dbReference>
<dbReference type="InterPro" id="IPR017861">
    <property type="entry name" value="KAE1/TsaD"/>
</dbReference>
<dbReference type="InterPro" id="IPR022450">
    <property type="entry name" value="TsaD"/>
</dbReference>
<dbReference type="NCBIfam" id="TIGR00329">
    <property type="entry name" value="gcp_kae1"/>
    <property type="match status" value="1"/>
</dbReference>
<dbReference type="NCBIfam" id="TIGR03723">
    <property type="entry name" value="T6A_TsaD_YgjD"/>
    <property type="match status" value="1"/>
</dbReference>
<dbReference type="PANTHER" id="PTHR11735">
    <property type="entry name" value="TRNA N6-ADENOSINE THREONYLCARBAMOYLTRANSFERASE"/>
    <property type="match status" value="1"/>
</dbReference>
<dbReference type="PANTHER" id="PTHR11735:SF6">
    <property type="entry name" value="TRNA N6-ADENOSINE THREONYLCARBAMOYLTRANSFERASE, MITOCHONDRIAL"/>
    <property type="match status" value="1"/>
</dbReference>
<dbReference type="Pfam" id="PF00814">
    <property type="entry name" value="TsaD"/>
    <property type="match status" value="1"/>
</dbReference>
<dbReference type="PRINTS" id="PR00789">
    <property type="entry name" value="OSIALOPTASE"/>
</dbReference>
<dbReference type="SUPFAM" id="SSF53067">
    <property type="entry name" value="Actin-like ATPase domain"/>
    <property type="match status" value="1"/>
</dbReference>
<evidence type="ECO:0000255" key="1">
    <source>
        <dbReference type="HAMAP-Rule" id="MF_01445"/>
    </source>
</evidence>
<name>TSAD_LEPIN</name>
<sequence>MIGMGIETSCDETSIGIVRDGKDLLSLKIFSQIDLHKPYGGIVPEIASRAHLEKINLLLEEAMEESEIQFKDLSYVAVTSSPGLTGSLMVGAQMARCIHMVYETPILPVCHLQSHFAVLHLEGVPTEFPVLGLLLSGGNSAIYILHEFGKMELLGDTMDDALGEAFDKVAGLLELPYPGGPHIEVRAKEYKPSPNEKPILPALLRNLPQEEVSFSFSGLKTAVMVLLEKQKELSKERICWNFQNSAFDLVERNLKRAVSKTGIKRIFAAGGVLANFTLQNRLYTWAEKNSVELFAPKKKIYCTDNGAMVASLGYYLFQKGYQRDIDFTVSPSRQEIFS</sequence>
<protein>
    <recommendedName>
        <fullName evidence="1">tRNA N6-adenosine threonylcarbamoyltransferase</fullName>
        <ecNumber evidence="1">2.3.1.234</ecNumber>
    </recommendedName>
    <alternativeName>
        <fullName evidence="1">N6-L-threonylcarbamoyladenine synthase</fullName>
        <shortName evidence="1">t(6)A synthase</shortName>
    </alternativeName>
    <alternativeName>
        <fullName evidence="1">t(6)A37 threonylcarbamoyladenosine biosynthesis protein TsaD</fullName>
    </alternativeName>
    <alternativeName>
        <fullName evidence="1">tRNA threonylcarbamoyladenosine biosynthesis protein TsaD</fullName>
    </alternativeName>
</protein>
<feature type="chain" id="PRO_0000303409" description="tRNA N6-adenosine threonylcarbamoyltransferase">
    <location>
        <begin position="1"/>
        <end position="338"/>
    </location>
</feature>
<feature type="binding site" evidence="1">
    <location>
        <position position="111"/>
    </location>
    <ligand>
        <name>Fe cation</name>
        <dbReference type="ChEBI" id="CHEBI:24875"/>
    </ligand>
</feature>
<feature type="binding site" evidence="1">
    <location>
        <position position="115"/>
    </location>
    <ligand>
        <name>Fe cation</name>
        <dbReference type="ChEBI" id="CHEBI:24875"/>
    </ligand>
</feature>
<feature type="binding site" evidence="1">
    <location>
        <begin position="134"/>
        <end position="138"/>
    </location>
    <ligand>
        <name>substrate</name>
    </ligand>
</feature>
<feature type="binding site" evidence="1">
    <location>
        <position position="167"/>
    </location>
    <ligand>
        <name>substrate</name>
    </ligand>
</feature>
<feature type="binding site" evidence="1">
    <location>
        <position position="180"/>
    </location>
    <ligand>
        <name>substrate</name>
    </ligand>
</feature>
<feature type="binding site" evidence="1">
    <location>
        <position position="275"/>
    </location>
    <ligand>
        <name>substrate</name>
    </ligand>
</feature>
<feature type="binding site" evidence="1">
    <location>
        <position position="304"/>
    </location>
    <ligand>
        <name>Fe cation</name>
        <dbReference type="ChEBI" id="CHEBI:24875"/>
    </ligand>
</feature>
<proteinExistence type="inferred from homology"/>
<reference key="1">
    <citation type="journal article" date="2003" name="Nature">
        <title>Unique physiological and pathogenic features of Leptospira interrogans revealed by whole-genome sequencing.</title>
        <authorList>
            <person name="Ren S.-X."/>
            <person name="Fu G."/>
            <person name="Jiang X.-G."/>
            <person name="Zeng R."/>
            <person name="Miao Y.-G."/>
            <person name="Xu H."/>
            <person name="Zhang Y.-X."/>
            <person name="Xiong H."/>
            <person name="Lu G."/>
            <person name="Lu L.-F."/>
            <person name="Jiang H.-Q."/>
            <person name="Jia J."/>
            <person name="Tu Y.-F."/>
            <person name="Jiang J.-X."/>
            <person name="Gu W.-Y."/>
            <person name="Zhang Y.-Q."/>
            <person name="Cai Z."/>
            <person name="Sheng H.-H."/>
            <person name="Yin H.-F."/>
            <person name="Zhang Y."/>
            <person name="Zhu G.-F."/>
            <person name="Wan M."/>
            <person name="Huang H.-L."/>
            <person name="Qian Z."/>
            <person name="Wang S.-Y."/>
            <person name="Ma W."/>
            <person name="Yao Z.-J."/>
            <person name="Shen Y."/>
            <person name="Qiang B.-Q."/>
            <person name="Xia Q.-C."/>
            <person name="Guo X.-K."/>
            <person name="Danchin A."/>
            <person name="Saint Girons I."/>
            <person name="Somerville R.L."/>
            <person name="Wen Y.-M."/>
            <person name="Shi M.-H."/>
            <person name="Chen Z."/>
            <person name="Xu J.-G."/>
            <person name="Zhao G.-P."/>
        </authorList>
    </citation>
    <scope>NUCLEOTIDE SEQUENCE [LARGE SCALE GENOMIC DNA]</scope>
    <source>
        <strain>56601</strain>
    </source>
</reference>